<sequence>MQYCELDLSGQWLDTVYCEENFSDFVFIKFLNPSQFEEKIYCYTLHITKRTLENKRLLLYYEDEFKKHGHDINELVGDGIILRSCWNPRQ</sequence>
<organism>
    <name type="scientific">Saccharomyces cerevisiae (strain ATCC 204508 / S288c)</name>
    <name type="common">Baker's yeast</name>
    <dbReference type="NCBI Taxonomy" id="559292"/>
    <lineage>
        <taxon>Eukaryota</taxon>
        <taxon>Fungi</taxon>
        <taxon>Dikarya</taxon>
        <taxon>Ascomycota</taxon>
        <taxon>Saccharomycotina</taxon>
        <taxon>Saccharomycetes</taxon>
        <taxon>Saccharomycetales</taxon>
        <taxon>Saccharomycetaceae</taxon>
        <taxon>Saccharomyces</taxon>
    </lineage>
</organism>
<comment type="subcellular location">
    <subcellularLocation>
        <location evidence="1">Cytoplasm</location>
    </subcellularLocation>
</comment>
<comment type="miscellaneous">
    <text evidence="2">Present with 125 molecules/cell in log phase SD medium.</text>
</comment>
<gene>
    <name type="ordered locus">YOL159C-A</name>
</gene>
<evidence type="ECO:0000269" key="1">
    <source>
    </source>
</evidence>
<evidence type="ECO:0000269" key="2">
    <source>
    </source>
</evidence>
<protein>
    <recommendedName>
        <fullName>Uncharacterized protein YOL159C-A</fullName>
    </recommendedName>
</protein>
<reference key="1">
    <citation type="journal article" date="1997" name="Nature">
        <title>The nucleotide sequence of Saccharomyces cerevisiae chromosome XV.</title>
        <authorList>
            <person name="Dujon B."/>
            <person name="Albermann K."/>
            <person name="Aldea M."/>
            <person name="Alexandraki D."/>
            <person name="Ansorge W."/>
            <person name="Arino J."/>
            <person name="Benes V."/>
            <person name="Bohn C."/>
            <person name="Bolotin-Fukuhara M."/>
            <person name="Bordonne R."/>
            <person name="Boyer J."/>
            <person name="Camasses A."/>
            <person name="Casamayor A."/>
            <person name="Casas C."/>
            <person name="Cheret G."/>
            <person name="Cziepluch C."/>
            <person name="Daignan-Fornier B."/>
            <person name="Dang V.-D."/>
            <person name="de Haan M."/>
            <person name="Delius H."/>
            <person name="Durand P."/>
            <person name="Fairhead C."/>
            <person name="Feldmann H."/>
            <person name="Gaillon L."/>
            <person name="Galisson F."/>
            <person name="Gamo F.-J."/>
            <person name="Gancedo C."/>
            <person name="Goffeau A."/>
            <person name="Goulding S.E."/>
            <person name="Grivell L.A."/>
            <person name="Habbig B."/>
            <person name="Hand N.J."/>
            <person name="Hani J."/>
            <person name="Hattenhorst U."/>
            <person name="Hebling U."/>
            <person name="Hernando Y."/>
            <person name="Herrero E."/>
            <person name="Heumann K."/>
            <person name="Hiesel R."/>
            <person name="Hilger F."/>
            <person name="Hofmann B."/>
            <person name="Hollenberg C.P."/>
            <person name="Hughes B."/>
            <person name="Jauniaux J.-C."/>
            <person name="Kalogeropoulos A."/>
            <person name="Katsoulou C."/>
            <person name="Kordes E."/>
            <person name="Lafuente M.J."/>
            <person name="Landt O."/>
            <person name="Louis E.J."/>
            <person name="Maarse A.C."/>
            <person name="Madania A."/>
            <person name="Mannhaupt G."/>
            <person name="Marck C."/>
            <person name="Martin R.P."/>
            <person name="Mewes H.-W."/>
            <person name="Michaux G."/>
            <person name="Paces V."/>
            <person name="Parle-McDermott A.G."/>
            <person name="Pearson B.M."/>
            <person name="Perrin A."/>
            <person name="Pettersson B."/>
            <person name="Poch O."/>
            <person name="Pohl T.M."/>
            <person name="Poirey R."/>
            <person name="Portetelle D."/>
            <person name="Pujol A."/>
            <person name="Purnelle B."/>
            <person name="Ramezani Rad M."/>
            <person name="Rechmann S."/>
            <person name="Schwager C."/>
            <person name="Schweizer M."/>
            <person name="Sor F."/>
            <person name="Sterky F."/>
            <person name="Tarassov I.A."/>
            <person name="Teodoru C."/>
            <person name="Tettelin H."/>
            <person name="Thierry A."/>
            <person name="Tobiasch E."/>
            <person name="Tzermia M."/>
            <person name="Uhlen M."/>
            <person name="Unseld M."/>
            <person name="Valens M."/>
            <person name="Vandenbol M."/>
            <person name="Vetter I."/>
            <person name="Vlcek C."/>
            <person name="Voet M."/>
            <person name="Volckaert G."/>
            <person name="Voss H."/>
            <person name="Wambutt R."/>
            <person name="Wedler H."/>
            <person name="Wiemann S."/>
            <person name="Winsor B."/>
            <person name="Wolfe K.H."/>
            <person name="Zollner A."/>
            <person name="Zumstein E."/>
            <person name="Kleine K."/>
        </authorList>
    </citation>
    <scope>NUCLEOTIDE SEQUENCE [LARGE SCALE GENOMIC DNA]</scope>
    <source>
        <strain>ATCC 204508 / S288c</strain>
    </source>
</reference>
<reference key="2">
    <citation type="journal article" date="2014" name="G3 (Bethesda)">
        <title>The reference genome sequence of Saccharomyces cerevisiae: Then and now.</title>
        <authorList>
            <person name="Engel S.R."/>
            <person name="Dietrich F.S."/>
            <person name="Fisk D.G."/>
            <person name="Binkley G."/>
            <person name="Balakrishnan R."/>
            <person name="Costanzo M.C."/>
            <person name="Dwight S.S."/>
            <person name="Hitz B.C."/>
            <person name="Karra K."/>
            <person name="Nash R.S."/>
            <person name="Weng S."/>
            <person name="Wong E.D."/>
            <person name="Lloyd P."/>
            <person name="Skrzypek M.S."/>
            <person name="Miyasato S.R."/>
            <person name="Simison M."/>
            <person name="Cherry J.M."/>
        </authorList>
    </citation>
    <scope>GENOME REANNOTATION</scope>
    <source>
        <strain>ATCC 204508 / S288c</strain>
    </source>
</reference>
<reference key="3">
    <citation type="journal article" date="2000" name="FEBS Lett.">
        <title>Genomic exploration of the hemiascomycetous yeasts: 4. The genome of Saccharomyces cerevisiae revisited.</title>
        <authorList>
            <person name="Blandin G."/>
            <person name="Durrens P."/>
            <person name="Tekaia F."/>
            <person name="Aigle M."/>
            <person name="Bolotin-Fukuhara M."/>
            <person name="Bon E."/>
            <person name="Casaregola S."/>
            <person name="de Montigny J."/>
            <person name="Gaillardin C."/>
            <person name="Lepingle A."/>
            <person name="Llorente B."/>
            <person name="Malpertuy A."/>
            <person name="Neuveglise C."/>
            <person name="Ozier-Kalogeropoulos O."/>
            <person name="Perrin A."/>
            <person name="Potier S."/>
            <person name="Souciet J.-L."/>
            <person name="Talla E."/>
            <person name="Toffano-Nioche C."/>
            <person name="Wesolowski-Louvel M."/>
            <person name="Marck C."/>
            <person name="Dujon B."/>
        </authorList>
    </citation>
    <scope>GENOME REANNOTATION</scope>
</reference>
<reference key="4">
    <citation type="journal article" date="2003" name="Nature">
        <title>Global analysis of protein localization in budding yeast.</title>
        <authorList>
            <person name="Huh W.-K."/>
            <person name="Falvo J.V."/>
            <person name="Gerke L.C."/>
            <person name="Carroll A.S."/>
            <person name="Howson R.W."/>
            <person name="Weissman J.S."/>
            <person name="O'Shea E.K."/>
        </authorList>
    </citation>
    <scope>SUBCELLULAR LOCATION [LARGE SCALE ANALYSIS]</scope>
</reference>
<reference key="5">
    <citation type="journal article" date="2003" name="Nature">
        <title>Global analysis of protein expression in yeast.</title>
        <authorList>
            <person name="Ghaemmaghami S."/>
            <person name="Huh W.-K."/>
            <person name="Bower K."/>
            <person name="Howson R.W."/>
            <person name="Belle A."/>
            <person name="Dephoure N."/>
            <person name="O'Shea E.K."/>
            <person name="Weissman J.S."/>
        </authorList>
    </citation>
    <scope>LEVEL OF PROTEIN EXPRESSION [LARGE SCALE ANALYSIS]</scope>
</reference>
<dbReference type="EMBL" id="Z74901">
    <property type="status" value="NOT_ANNOTATED_CDS"/>
    <property type="molecule type" value="Genomic_DNA"/>
</dbReference>
<dbReference type="EMBL" id="BK006948">
    <property type="protein sequence ID" value="DAA10626.1"/>
    <property type="molecule type" value="Genomic_DNA"/>
</dbReference>
<dbReference type="RefSeq" id="NP_076909.1">
    <property type="nucleotide sequence ID" value="NM_001184493.1"/>
</dbReference>
<dbReference type="BioGRID" id="34258">
    <property type="interactions" value="57"/>
</dbReference>
<dbReference type="FunCoup" id="Q3E769">
    <property type="interactions" value="11"/>
</dbReference>
<dbReference type="MINT" id="Q3E769"/>
<dbReference type="STRING" id="4932.YOL159C-A"/>
<dbReference type="PaxDb" id="4932-YOL159C-A"/>
<dbReference type="PeptideAtlas" id="Q3E769"/>
<dbReference type="EnsemblFungi" id="YOL159C-A_mRNA">
    <property type="protein sequence ID" value="YOL159C-A"/>
    <property type="gene ID" value="YOL159C-A"/>
</dbReference>
<dbReference type="GeneID" id="854005"/>
<dbReference type="KEGG" id="sce:YOL159C-A"/>
<dbReference type="AGR" id="SGD:S000007627"/>
<dbReference type="SGD" id="S000007627">
    <property type="gene designation" value="YOL159C-A"/>
</dbReference>
<dbReference type="VEuPathDB" id="FungiDB:YOL159C-A"/>
<dbReference type="HOGENOM" id="CLU_2442110_0_0_1"/>
<dbReference type="InParanoid" id="Q3E769"/>
<dbReference type="OrthoDB" id="4036906at2759"/>
<dbReference type="BioCyc" id="YEAST:G3O-33897-MONOMER"/>
<dbReference type="BioGRID-ORCS" id="854005">
    <property type="hits" value="5 hits in 10 CRISPR screens"/>
</dbReference>
<dbReference type="PRO" id="PR:Q3E769"/>
<dbReference type="Proteomes" id="UP000002311">
    <property type="component" value="Chromosome XV"/>
</dbReference>
<dbReference type="RNAct" id="Q3E769">
    <property type="molecule type" value="protein"/>
</dbReference>
<dbReference type="GO" id="GO:0005737">
    <property type="term" value="C:cytoplasm"/>
    <property type="evidence" value="ECO:0000314"/>
    <property type="project" value="SGD"/>
</dbReference>
<dbReference type="GO" id="GO:0005634">
    <property type="term" value="C:nucleus"/>
    <property type="evidence" value="ECO:0000314"/>
    <property type="project" value="SGD"/>
</dbReference>
<proteinExistence type="evidence at protein level"/>
<feature type="chain" id="PRO_0000245277" description="Uncharacterized protein YOL159C-A">
    <location>
        <begin position="1"/>
        <end position="90"/>
    </location>
</feature>
<name>YO59A_YEAST</name>
<keyword id="KW-0963">Cytoplasm</keyword>
<keyword id="KW-1185">Reference proteome</keyword>
<accession>Q3E769</accession>
<accession>D6W1R0</accession>